<dbReference type="EMBL" id="AP006618">
    <property type="protein sequence ID" value="BAD59963.1"/>
    <property type="molecule type" value="Genomic_DNA"/>
</dbReference>
<dbReference type="RefSeq" id="WP_011211645.1">
    <property type="nucleotide sequence ID" value="NC_006361.1"/>
</dbReference>
<dbReference type="SMR" id="Q5YPC8"/>
<dbReference type="STRING" id="247156.NFA_51110"/>
<dbReference type="GeneID" id="61135685"/>
<dbReference type="KEGG" id="nfa:NFA_51110"/>
<dbReference type="eggNOG" id="COG0222">
    <property type="taxonomic scope" value="Bacteria"/>
</dbReference>
<dbReference type="HOGENOM" id="CLU_086499_3_0_11"/>
<dbReference type="OrthoDB" id="9811748at2"/>
<dbReference type="Proteomes" id="UP000006820">
    <property type="component" value="Chromosome"/>
</dbReference>
<dbReference type="GO" id="GO:0022625">
    <property type="term" value="C:cytosolic large ribosomal subunit"/>
    <property type="evidence" value="ECO:0007669"/>
    <property type="project" value="TreeGrafter"/>
</dbReference>
<dbReference type="GO" id="GO:0003729">
    <property type="term" value="F:mRNA binding"/>
    <property type="evidence" value="ECO:0007669"/>
    <property type="project" value="TreeGrafter"/>
</dbReference>
<dbReference type="GO" id="GO:0003735">
    <property type="term" value="F:structural constituent of ribosome"/>
    <property type="evidence" value="ECO:0007669"/>
    <property type="project" value="InterPro"/>
</dbReference>
<dbReference type="GO" id="GO:0006412">
    <property type="term" value="P:translation"/>
    <property type="evidence" value="ECO:0007669"/>
    <property type="project" value="UniProtKB-UniRule"/>
</dbReference>
<dbReference type="CDD" id="cd00387">
    <property type="entry name" value="Ribosomal_L7_L12"/>
    <property type="match status" value="1"/>
</dbReference>
<dbReference type="FunFam" id="1.20.5.710:FF:000005">
    <property type="entry name" value="50S ribosomal protein L7/L12"/>
    <property type="match status" value="1"/>
</dbReference>
<dbReference type="FunFam" id="3.30.1390.10:FF:000001">
    <property type="entry name" value="50S ribosomal protein L7/L12"/>
    <property type="match status" value="1"/>
</dbReference>
<dbReference type="Gene3D" id="3.30.1390.10">
    <property type="match status" value="1"/>
</dbReference>
<dbReference type="Gene3D" id="1.20.5.710">
    <property type="entry name" value="Single helix bin"/>
    <property type="match status" value="1"/>
</dbReference>
<dbReference type="HAMAP" id="MF_00368">
    <property type="entry name" value="Ribosomal_bL12"/>
    <property type="match status" value="1"/>
</dbReference>
<dbReference type="InterPro" id="IPR000206">
    <property type="entry name" value="Ribosomal_bL12"/>
</dbReference>
<dbReference type="InterPro" id="IPR013823">
    <property type="entry name" value="Ribosomal_bL12_C"/>
</dbReference>
<dbReference type="InterPro" id="IPR014719">
    <property type="entry name" value="Ribosomal_bL12_C/ClpS-like"/>
</dbReference>
<dbReference type="InterPro" id="IPR008932">
    <property type="entry name" value="Ribosomal_bL12_oligo"/>
</dbReference>
<dbReference type="InterPro" id="IPR036235">
    <property type="entry name" value="Ribosomal_bL12_oligo_N_sf"/>
</dbReference>
<dbReference type="NCBIfam" id="TIGR00855">
    <property type="entry name" value="L12"/>
    <property type="match status" value="1"/>
</dbReference>
<dbReference type="PANTHER" id="PTHR45987">
    <property type="entry name" value="39S RIBOSOMAL PROTEIN L12"/>
    <property type="match status" value="1"/>
</dbReference>
<dbReference type="PANTHER" id="PTHR45987:SF4">
    <property type="entry name" value="LARGE RIBOSOMAL SUBUNIT PROTEIN BL12M"/>
    <property type="match status" value="1"/>
</dbReference>
<dbReference type="Pfam" id="PF00542">
    <property type="entry name" value="Ribosomal_L12"/>
    <property type="match status" value="1"/>
</dbReference>
<dbReference type="Pfam" id="PF16320">
    <property type="entry name" value="Ribosomal_L12_N"/>
    <property type="match status" value="1"/>
</dbReference>
<dbReference type="SUPFAM" id="SSF54736">
    <property type="entry name" value="ClpS-like"/>
    <property type="match status" value="1"/>
</dbReference>
<dbReference type="SUPFAM" id="SSF48300">
    <property type="entry name" value="Ribosomal protein L7/12, oligomerisation (N-terminal) domain"/>
    <property type="match status" value="1"/>
</dbReference>
<feature type="chain" id="PRO_0000243455" description="Large ribosomal subunit protein bL12">
    <location>
        <begin position="1"/>
        <end position="126"/>
    </location>
</feature>
<protein>
    <recommendedName>
        <fullName evidence="1">Large ribosomal subunit protein bL12</fullName>
    </recommendedName>
    <alternativeName>
        <fullName evidence="2">50S ribosomal protein L7/L12</fullName>
    </alternativeName>
</protein>
<organism>
    <name type="scientific">Nocardia farcinica (strain IFM 10152)</name>
    <dbReference type="NCBI Taxonomy" id="247156"/>
    <lineage>
        <taxon>Bacteria</taxon>
        <taxon>Bacillati</taxon>
        <taxon>Actinomycetota</taxon>
        <taxon>Actinomycetes</taxon>
        <taxon>Mycobacteriales</taxon>
        <taxon>Nocardiaceae</taxon>
        <taxon>Nocardia</taxon>
    </lineage>
</organism>
<reference key="1">
    <citation type="journal article" date="2004" name="Proc. Natl. Acad. Sci. U.S.A.">
        <title>The complete genomic sequence of Nocardia farcinica IFM 10152.</title>
        <authorList>
            <person name="Ishikawa J."/>
            <person name="Yamashita A."/>
            <person name="Mikami Y."/>
            <person name="Hoshino Y."/>
            <person name="Kurita H."/>
            <person name="Hotta K."/>
            <person name="Shiba T."/>
            <person name="Hattori M."/>
        </authorList>
    </citation>
    <scope>NUCLEOTIDE SEQUENCE [LARGE SCALE GENOMIC DNA]</scope>
    <source>
        <strain>IFM 10152</strain>
    </source>
</reference>
<name>RL7_NOCFA</name>
<proteinExistence type="inferred from homology"/>
<keyword id="KW-1185">Reference proteome</keyword>
<keyword id="KW-0687">Ribonucleoprotein</keyword>
<keyword id="KW-0689">Ribosomal protein</keyword>
<accession>Q5YPC8</accession>
<evidence type="ECO:0000255" key="1">
    <source>
        <dbReference type="HAMAP-Rule" id="MF_00368"/>
    </source>
</evidence>
<evidence type="ECO:0000305" key="2"/>
<gene>
    <name evidence="1" type="primary">rplL</name>
    <name type="ordered locus">NFA_51110</name>
</gene>
<sequence length="126" mass="13137">MANVDELLETFGNMTLLELSDFVKKFEEKFEVTAAAPVAVAAAGGAAAPAEAAEEQDEFDVILEGAGDKKIQVIKVVREIVSGLGLKEAKDLVEGAPKPILEKVAKDAADAAKAKLEEAGAKVSVK</sequence>
<comment type="function">
    <text evidence="1">Forms part of the ribosomal stalk which helps the ribosome interact with GTP-bound translation factors. Is thus essential for accurate translation.</text>
</comment>
<comment type="subunit">
    <text evidence="1">Homodimer. Part of the ribosomal stalk of the 50S ribosomal subunit. Forms a multimeric L10(L12)X complex, where L10 forms an elongated spine to which 2 to 4 L12 dimers bind in a sequential fashion. Binds GTP-bound translation factors.</text>
</comment>
<comment type="similarity">
    <text evidence="1">Belongs to the bacterial ribosomal protein bL12 family.</text>
</comment>